<organismHost>
    <name type="scientific">Homo sapiens</name>
    <name type="common">Human</name>
    <dbReference type="NCBI Taxonomy" id="9606"/>
</organismHost>
<sequence>MPANQPPLYLTFLLLILLYLIITLYVWTILTINHKTAVRYAALYQRSCSRWGFDQSL</sequence>
<gene>
    <name type="primary">SH</name>
</gene>
<dbReference type="EMBL" id="M25421">
    <property type="protein sequence ID" value="AAA50290.1"/>
    <property type="molecule type" value="Genomic_RNA"/>
</dbReference>
<dbReference type="PIR" id="A31884">
    <property type="entry name" value="SHNZMV"/>
</dbReference>
<dbReference type="SMR" id="P69464"/>
<dbReference type="GO" id="GO:0020002">
    <property type="term" value="C:host cell plasma membrane"/>
    <property type="evidence" value="ECO:0007669"/>
    <property type="project" value="UniProtKB-SubCell"/>
</dbReference>
<dbReference type="GO" id="GO:0016020">
    <property type="term" value="C:membrane"/>
    <property type="evidence" value="ECO:0007669"/>
    <property type="project" value="UniProtKB-KW"/>
</dbReference>
<dbReference type="GO" id="GO:0055036">
    <property type="term" value="C:virion membrane"/>
    <property type="evidence" value="ECO:0007669"/>
    <property type="project" value="UniProtKB-SubCell"/>
</dbReference>
<dbReference type="GO" id="GO:0085034">
    <property type="term" value="P:symbiont-mediated suppression of host NF-kappaB cascade"/>
    <property type="evidence" value="ECO:0007669"/>
    <property type="project" value="UniProtKB-KW"/>
</dbReference>
<dbReference type="InterPro" id="IPR001477">
    <property type="entry name" value="SH"/>
</dbReference>
<dbReference type="Pfam" id="PF01445">
    <property type="entry name" value="SH"/>
    <property type="match status" value="1"/>
</dbReference>
<dbReference type="PIRSF" id="PIRSF003923">
    <property type="entry name" value="SH"/>
    <property type="match status" value="1"/>
</dbReference>
<organism>
    <name type="scientific">Mumps virus (strain SBL-1)</name>
    <name type="common">MuV</name>
    <dbReference type="NCBI Taxonomy" id="11173"/>
    <lineage>
        <taxon>Viruses</taxon>
        <taxon>Riboviria</taxon>
        <taxon>Orthornavirae</taxon>
        <taxon>Negarnaviricota</taxon>
        <taxon>Haploviricotina</taxon>
        <taxon>Monjiviricetes</taxon>
        <taxon>Mononegavirales</taxon>
        <taxon>Paramyxoviridae</taxon>
        <taxon>Rubulavirinae</taxon>
        <taxon>Orthorubulavirus</taxon>
        <taxon>Orthorubulavirus parotitidis</taxon>
        <taxon>Mumps orthorubulavirus</taxon>
    </lineage>
</organism>
<protein>
    <recommendedName>
        <fullName>Small hydrophobic protein</fullName>
    </recommendedName>
</protein>
<evidence type="ECO:0000250" key="1">
    <source>
        <dbReference type="UniProtKB" id="P22110"/>
    </source>
</evidence>
<evidence type="ECO:0000250" key="2">
    <source>
        <dbReference type="UniProtKB" id="P22112"/>
    </source>
</evidence>
<evidence type="ECO:0000255" key="3"/>
<evidence type="ECO:0000305" key="4"/>
<keyword id="KW-1032">Host cell membrane</keyword>
<keyword id="KW-1043">Host membrane</keyword>
<keyword id="KW-0945">Host-virus interaction</keyword>
<keyword id="KW-1100">Inhibition of host NF-kappa-B by virus</keyword>
<keyword id="KW-0472">Membrane</keyword>
<keyword id="KW-0812">Transmembrane</keyword>
<keyword id="KW-1133">Transmembrane helix</keyword>
<keyword id="KW-0946">Virion</keyword>
<accession>P69464</accession>
<accession>P19719</accession>
<comment type="function">
    <text evidence="2">Plays a role in the inhibition of the host NF-kappa-B pathway. This inhibition occurs at the receptor level, by preventing the signaling of TNFR1 as well as IL-1R and TLR3.</text>
</comment>
<comment type="subunit">
    <text evidence="1 2">Interacts with host TNFRSF1A, RIPK1 and IRAK1; these interactions interfere with host NF-kappa-B activation at the level of receptor complexes (By similarity). Interacts with host protein UBQLN4 (By similarity).</text>
</comment>
<comment type="subcellular location">
    <subcellularLocation>
        <location evidence="2">Virion membrane</location>
        <topology evidence="2">Single-pass membrane protein</topology>
    </subcellularLocation>
    <subcellularLocation>
        <location evidence="2">Host cell membrane</location>
        <topology evidence="2">Single-pass membrane protein</topology>
    </subcellularLocation>
</comment>
<comment type="similarity">
    <text evidence="4">Belongs to the rubulavirus small hydrophobic protein family.</text>
</comment>
<reference key="1">
    <citation type="journal article" date="1989" name="J. Virol.">
        <title>mRNA sequence and deduced amino acid sequence of the mumps virus small hydrophobic protein gene.</title>
        <authorList>
            <person name="Elango N."/>
            <person name="Koevamees J."/>
            <person name="Varsanyi T.M."/>
            <person name="Norrby E."/>
        </authorList>
    </citation>
    <scope>NUCLEOTIDE SEQUENCE [GENOMIC RNA]</scope>
</reference>
<feature type="chain" id="PRO_0000142873" description="Small hydrophobic protein">
    <location>
        <begin position="1"/>
        <end position="57"/>
    </location>
</feature>
<feature type="topological domain" description="Virion surface" evidence="3">
    <location>
        <begin position="1"/>
        <end position="8"/>
    </location>
</feature>
<feature type="transmembrane region" description="Helical" evidence="3">
    <location>
        <begin position="9"/>
        <end position="29"/>
    </location>
</feature>
<feature type="topological domain" description="Intravirion" evidence="3">
    <location>
        <begin position="30"/>
        <end position="57"/>
    </location>
</feature>
<name>SH_MUMP1</name>
<proteinExistence type="inferred from homology"/>